<organism>
    <name type="scientific">Mycosarcoma maydis</name>
    <name type="common">Corn smut fungus</name>
    <name type="synonym">Ustilago maydis</name>
    <dbReference type="NCBI Taxonomy" id="5270"/>
    <lineage>
        <taxon>Eukaryota</taxon>
        <taxon>Fungi</taxon>
        <taxon>Dikarya</taxon>
        <taxon>Basidiomycota</taxon>
        <taxon>Ustilaginomycotina</taxon>
        <taxon>Ustilaginomycetes</taxon>
        <taxon>Ustilaginales</taxon>
        <taxon>Ustilaginaceae</taxon>
        <taxon>Mycosarcoma</taxon>
    </lineage>
</organism>
<gene>
    <name type="primary">NMT1</name>
    <name type="ORF">UMAG_02657</name>
</gene>
<name>NMT_MYCMD</name>
<feature type="chain" id="PRO_0000064245" description="Glycylpeptide N-tetradecanoyltransferase">
    <location>
        <begin position="1"/>
        <end position="706"/>
    </location>
</feature>
<feature type="region of interest" description="Disordered" evidence="3">
    <location>
        <begin position="1"/>
        <end position="119"/>
    </location>
</feature>
<feature type="compositionally biased region" description="Low complexity" evidence="3">
    <location>
        <begin position="7"/>
        <end position="42"/>
    </location>
</feature>
<feature type="compositionally biased region" description="Acidic residues" evidence="3">
    <location>
        <begin position="47"/>
        <end position="65"/>
    </location>
</feature>
<feature type="compositionally biased region" description="Basic residues" evidence="3">
    <location>
        <begin position="78"/>
        <end position="95"/>
    </location>
</feature>
<feature type="active site" description="Proton acceptor; via carboxylate" evidence="1">
    <location>
        <position position="706"/>
    </location>
</feature>
<feature type="binding site" evidence="2">
    <location>
        <begin position="180"/>
        <end position="183"/>
    </location>
    <ligand>
        <name>tetradecanoyl-CoA</name>
        <dbReference type="ChEBI" id="CHEBI:57385"/>
    </ligand>
</feature>
<feature type="binding site" evidence="2">
    <location>
        <begin position="317"/>
        <end position="319"/>
    </location>
    <ligand>
        <name>tetradecanoyl-CoA</name>
        <dbReference type="ChEBI" id="CHEBI:57385"/>
    </ligand>
</feature>
<feature type="binding site" evidence="2">
    <location>
        <begin position="325"/>
        <end position="329"/>
    </location>
    <ligand>
        <name>tetradecanoyl-CoA</name>
        <dbReference type="ChEBI" id="CHEBI:57385"/>
    </ligand>
</feature>
<comment type="function">
    <text evidence="1">Adds a myristoyl group to the N-terminal glycine residue of certain cellular proteins.</text>
</comment>
<comment type="catalytic activity">
    <reaction>
        <text>N-terminal glycyl-[protein] + tetradecanoyl-CoA = N-tetradecanoylglycyl-[protein] + CoA + H(+)</text>
        <dbReference type="Rhea" id="RHEA:15521"/>
        <dbReference type="Rhea" id="RHEA-COMP:12666"/>
        <dbReference type="Rhea" id="RHEA-COMP:12667"/>
        <dbReference type="ChEBI" id="CHEBI:15378"/>
        <dbReference type="ChEBI" id="CHEBI:57287"/>
        <dbReference type="ChEBI" id="CHEBI:57385"/>
        <dbReference type="ChEBI" id="CHEBI:64723"/>
        <dbReference type="ChEBI" id="CHEBI:133050"/>
        <dbReference type="EC" id="2.3.1.97"/>
    </reaction>
</comment>
<comment type="subunit">
    <text evidence="1">Monomer.</text>
</comment>
<comment type="subcellular location">
    <subcellularLocation>
        <location evidence="1">Cytoplasm</location>
    </subcellularLocation>
</comment>
<comment type="similarity">
    <text evidence="4">Belongs to the NMT family.</text>
</comment>
<evidence type="ECO:0000250" key="1"/>
<evidence type="ECO:0000250" key="2">
    <source>
        <dbReference type="UniProtKB" id="P14743"/>
    </source>
</evidence>
<evidence type="ECO:0000256" key="3">
    <source>
        <dbReference type="SAM" id="MobiDB-lite"/>
    </source>
</evidence>
<evidence type="ECO:0000305" key="4"/>
<reference key="1">
    <citation type="journal article" date="2006" name="Nature">
        <title>Insights from the genome of the biotrophic fungal plant pathogen Ustilago maydis.</title>
        <authorList>
            <person name="Kaemper J."/>
            <person name="Kahmann R."/>
            <person name="Boelker M."/>
            <person name="Ma L.-J."/>
            <person name="Brefort T."/>
            <person name="Saville B.J."/>
            <person name="Banuett F."/>
            <person name="Kronstad J.W."/>
            <person name="Gold S.E."/>
            <person name="Mueller O."/>
            <person name="Perlin M.H."/>
            <person name="Woesten H.A.B."/>
            <person name="de Vries R."/>
            <person name="Ruiz-Herrera J."/>
            <person name="Reynaga-Pena C.G."/>
            <person name="Snetselaar K."/>
            <person name="McCann M."/>
            <person name="Perez-Martin J."/>
            <person name="Feldbruegge M."/>
            <person name="Basse C.W."/>
            <person name="Steinberg G."/>
            <person name="Ibeas J.I."/>
            <person name="Holloman W."/>
            <person name="Guzman P."/>
            <person name="Farman M.L."/>
            <person name="Stajich J.E."/>
            <person name="Sentandreu R."/>
            <person name="Gonzalez-Prieto J.M."/>
            <person name="Kennell J.C."/>
            <person name="Molina L."/>
            <person name="Schirawski J."/>
            <person name="Mendoza-Mendoza A."/>
            <person name="Greilinger D."/>
            <person name="Muench K."/>
            <person name="Roessel N."/>
            <person name="Scherer M."/>
            <person name="Vranes M."/>
            <person name="Ladendorf O."/>
            <person name="Vincon V."/>
            <person name="Fuchs U."/>
            <person name="Sandrock B."/>
            <person name="Meng S."/>
            <person name="Ho E.C.H."/>
            <person name="Cahill M.J."/>
            <person name="Boyce K.J."/>
            <person name="Klose J."/>
            <person name="Klosterman S.J."/>
            <person name="Deelstra H.J."/>
            <person name="Ortiz-Castellanos L."/>
            <person name="Li W."/>
            <person name="Sanchez-Alonso P."/>
            <person name="Schreier P.H."/>
            <person name="Haeuser-Hahn I."/>
            <person name="Vaupel M."/>
            <person name="Koopmann E."/>
            <person name="Friedrich G."/>
            <person name="Voss H."/>
            <person name="Schlueter T."/>
            <person name="Margolis J."/>
            <person name="Platt D."/>
            <person name="Swimmer C."/>
            <person name="Gnirke A."/>
            <person name="Chen F."/>
            <person name="Vysotskaia V."/>
            <person name="Mannhaupt G."/>
            <person name="Gueldener U."/>
            <person name="Muensterkoetter M."/>
            <person name="Haase D."/>
            <person name="Oesterheld M."/>
            <person name="Mewes H.-W."/>
            <person name="Mauceli E.W."/>
            <person name="DeCaprio D."/>
            <person name="Wade C.M."/>
            <person name="Butler J."/>
            <person name="Young S.K."/>
            <person name="Jaffe D.B."/>
            <person name="Calvo S.E."/>
            <person name="Nusbaum C."/>
            <person name="Galagan J.E."/>
            <person name="Birren B.W."/>
        </authorList>
    </citation>
    <scope>NUCLEOTIDE SEQUENCE [LARGE SCALE GENOMIC DNA]</scope>
    <source>
        <strain>DSM 14603 / FGSC 9021 / UM521</strain>
    </source>
</reference>
<reference key="2">
    <citation type="submission" date="2014-09" db="EMBL/GenBank/DDBJ databases">
        <authorList>
            <person name="Gueldener U."/>
            <person name="Muensterkoetter M."/>
            <person name="Walter M.C."/>
            <person name="Mannhaupt G."/>
            <person name="Kahmann R."/>
        </authorList>
    </citation>
    <scope>GENOME REANNOTATION</scope>
    <source>
        <strain>DSM 14603 / FGSC 9021 / UM521</strain>
    </source>
</reference>
<keyword id="KW-0012">Acyltransferase</keyword>
<keyword id="KW-0963">Cytoplasm</keyword>
<keyword id="KW-1185">Reference proteome</keyword>
<keyword id="KW-0808">Transferase</keyword>
<dbReference type="EC" id="2.3.1.97"/>
<dbReference type="EMBL" id="CM003145">
    <property type="protein sequence ID" value="KIS69316.1"/>
    <property type="molecule type" value="Genomic_DNA"/>
</dbReference>
<dbReference type="RefSeq" id="XP_011389045.1">
    <property type="nucleotide sequence ID" value="XM_011390743.1"/>
</dbReference>
<dbReference type="SMR" id="Q4PB56"/>
<dbReference type="FunCoup" id="Q4PB56">
    <property type="interactions" value="599"/>
</dbReference>
<dbReference type="STRING" id="237631.Q4PB56"/>
<dbReference type="EnsemblFungi" id="KIS69316">
    <property type="protein sequence ID" value="KIS69316"/>
    <property type="gene ID" value="UMAG_02657"/>
</dbReference>
<dbReference type="GeneID" id="23563355"/>
<dbReference type="KEGG" id="uma:UMAG_02657"/>
<dbReference type="VEuPathDB" id="FungiDB:UMAG_02657"/>
<dbReference type="eggNOG" id="KOG2779">
    <property type="taxonomic scope" value="Eukaryota"/>
</dbReference>
<dbReference type="HOGENOM" id="CLU_022882_2_0_1"/>
<dbReference type="InParanoid" id="Q4PB56"/>
<dbReference type="OMA" id="TRQCHLT"/>
<dbReference type="OrthoDB" id="60315at2759"/>
<dbReference type="Proteomes" id="UP000000561">
    <property type="component" value="Chromosome 6"/>
</dbReference>
<dbReference type="GO" id="GO:0005829">
    <property type="term" value="C:cytosol"/>
    <property type="evidence" value="ECO:0000318"/>
    <property type="project" value="GO_Central"/>
</dbReference>
<dbReference type="GO" id="GO:0004379">
    <property type="term" value="F:glycylpeptide N-tetradecanoyltransferase activity"/>
    <property type="evidence" value="ECO:0000318"/>
    <property type="project" value="GO_Central"/>
</dbReference>
<dbReference type="GO" id="GO:0072657">
    <property type="term" value="P:protein localization to membrane"/>
    <property type="evidence" value="ECO:0000318"/>
    <property type="project" value="GO_Central"/>
</dbReference>
<dbReference type="FunFam" id="3.40.630.30:FF:000042">
    <property type="entry name" value="Glycylpeptide N-tetradecanoyltransferase"/>
    <property type="match status" value="1"/>
</dbReference>
<dbReference type="Gene3D" id="3.40.630.170">
    <property type="match status" value="1"/>
</dbReference>
<dbReference type="InterPro" id="IPR016181">
    <property type="entry name" value="Acyl_CoA_acyltransferase"/>
</dbReference>
<dbReference type="InterPro" id="IPR000903">
    <property type="entry name" value="NMT"/>
</dbReference>
<dbReference type="InterPro" id="IPR022677">
    <property type="entry name" value="NMT_C"/>
</dbReference>
<dbReference type="InterPro" id="IPR022678">
    <property type="entry name" value="NMT_CS"/>
</dbReference>
<dbReference type="InterPro" id="IPR022676">
    <property type="entry name" value="NMT_N"/>
</dbReference>
<dbReference type="PANTHER" id="PTHR11377:SF5">
    <property type="entry name" value="GLYCYLPEPTIDE N-TETRADECANOYLTRANSFERASE"/>
    <property type="match status" value="1"/>
</dbReference>
<dbReference type="PANTHER" id="PTHR11377">
    <property type="entry name" value="N-MYRISTOYL TRANSFERASE"/>
    <property type="match status" value="1"/>
</dbReference>
<dbReference type="Pfam" id="PF01233">
    <property type="entry name" value="NMT"/>
    <property type="match status" value="1"/>
</dbReference>
<dbReference type="Pfam" id="PF02799">
    <property type="entry name" value="NMT_C"/>
    <property type="match status" value="2"/>
</dbReference>
<dbReference type="SUPFAM" id="SSF55729">
    <property type="entry name" value="Acyl-CoA N-acyltransferases (Nat)"/>
    <property type="match status" value="2"/>
</dbReference>
<dbReference type="PROSITE" id="PS00975">
    <property type="entry name" value="NMT_1"/>
    <property type="match status" value="1"/>
</dbReference>
<dbReference type="PROSITE" id="PS00976">
    <property type="entry name" value="NMT_2"/>
    <property type="match status" value="1"/>
</dbReference>
<accession>Q4PB56</accession>
<accession>A0A0D1E0A8</accession>
<protein>
    <recommendedName>
        <fullName>Glycylpeptide N-tetradecanoyltransferase</fullName>
        <ecNumber>2.3.1.97</ecNumber>
    </recommendedName>
    <alternativeName>
        <fullName>Myristoyl-CoA:protein N-myristoyltransferase</fullName>
        <shortName>NMT</shortName>
    </alternativeName>
    <alternativeName>
        <fullName>Peptide N-myristoyltransferase</fullName>
    </alternativeName>
</protein>
<sequence length="706" mass="77562">MSGIAGTSQDTSVAASASSSSTRPAAASSSIAPPSPSLTTAPVKEQEQDDDDDQENDDEEEEEEGTAAITGADGLTAKQRKKKKSKAAAKLRKKLGLGGSPTDASEGKLLASGSSREGKISDEVVSQVQRAVQAEHGSVAANAVTKANLAKVMAMMNLERDAMLKSQDSKQKAQKAIADHKFWKTQPVMKPTDAPVVKSDQEGSIEASVPPEQVRQEPYPLPADFEWVMIDVDNEGELKEVYDLLSANYVEDDDATFRFDYSPEFLHWVLKHPGYQKTWHIGVRVASTKKLVAFISGIPHELRVREKSYQSTEINFLCVHKKLRSKRLAPVLIKEVTRQCHLTGVFHAIYTVGSVLPTPVSCSRYYHRTINAKKLAEIGFSAIPHNMSMEAHVKRFELPAKTNLPGLREMERRDVAQVGKLMRRYMRRFDMAPRFSDHEVEHILLSGRGEACQGGRGRKGQVTWTYVVENSEGRITDMFAFYSLPSSILDSDKHQSLNAAYLFYYATDVVFQGDCDCDSDSSGVCDAETGRASTSQPSSERAVALAAGKAAWQCNSLTNLTSCELADEARVAAWDSEPAHIKTALKTRLNLLINTLLIIARDHDFDVVNCVTVMDNALFLQQQKFGPGDGFLRFYLFNWRTKPVAGGMGARPGEAELDPVQAYARSMAKRAAHTDDDDVKRLAEQLIRNAAINPAEVGSGNGIVMV</sequence>
<proteinExistence type="inferred from homology"/>